<comment type="function">
    <text evidence="1">Cell wall formation.</text>
</comment>
<comment type="catalytic activity">
    <reaction evidence="1">
        <text>UDP-N-acetyl-alpha-D-muramate + NADP(+) = UDP-N-acetyl-3-O-(1-carboxyvinyl)-alpha-D-glucosamine + NADPH + H(+)</text>
        <dbReference type="Rhea" id="RHEA:12248"/>
        <dbReference type="ChEBI" id="CHEBI:15378"/>
        <dbReference type="ChEBI" id="CHEBI:57783"/>
        <dbReference type="ChEBI" id="CHEBI:58349"/>
        <dbReference type="ChEBI" id="CHEBI:68483"/>
        <dbReference type="ChEBI" id="CHEBI:70757"/>
        <dbReference type="EC" id="1.3.1.98"/>
    </reaction>
</comment>
<comment type="cofactor">
    <cofactor evidence="1">
        <name>FAD</name>
        <dbReference type="ChEBI" id="CHEBI:57692"/>
    </cofactor>
</comment>
<comment type="pathway">
    <text evidence="1">Cell wall biogenesis; peptidoglycan biosynthesis.</text>
</comment>
<comment type="subcellular location">
    <subcellularLocation>
        <location evidence="1">Cytoplasm</location>
    </subcellularLocation>
</comment>
<comment type="similarity">
    <text evidence="1">Belongs to the MurB family.</text>
</comment>
<sequence length="302" mass="33135">MKDKIRLELEGIDIRFDEPLKEYTYTKVGGAVDYLAFPRNRYEIVRIVEFAKREGIPWQVLGNSSNIIVRDGGIRGFVIRMDKLNSVTVSGYTIEAEAGANLIETTKVALFHSLSGFEFACGIPGSIGGAVYMNAGAYGGEVAHILVSAQILTPAGYVETLDNRELRFGYRSSILQENGAIVLSAKFALRPGNHTVIQQEMARLTHLRELKQPLEYPSCGSVFKRPLGHFAGQLIMDAGLKGYRIGGVEVSEKHAGFMVNIENGTASDYENLIAHVIQVVEKSSGITLEREVRIIGDPADTL</sequence>
<evidence type="ECO:0000255" key="1">
    <source>
        <dbReference type="HAMAP-Rule" id="MF_00037"/>
    </source>
</evidence>
<reference key="1">
    <citation type="journal article" date="2007" name="PLoS ONE">
        <title>A glimpse of streptococcal toxic shock syndrome from comparative genomics of S. suis 2 Chinese isolates.</title>
        <authorList>
            <person name="Chen C."/>
            <person name="Tang J."/>
            <person name="Dong W."/>
            <person name="Wang C."/>
            <person name="Feng Y."/>
            <person name="Wang J."/>
            <person name="Zheng F."/>
            <person name="Pan X."/>
            <person name="Liu D."/>
            <person name="Li M."/>
            <person name="Song Y."/>
            <person name="Zhu X."/>
            <person name="Sun H."/>
            <person name="Feng T."/>
            <person name="Guo Z."/>
            <person name="Ju A."/>
            <person name="Ge J."/>
            <person name="Dong Y."/>
            <person name="Sun W."/>
            <person name="Jiang Y."/>
            <person name="Wang J."/>
            <person name="Yan J."/>
            <person name="Yang H."/>
            <person name="Wang X."/>
            <person name="Gao G.F."/>
            <person name="Yang R."/>
            <person name="Wang J."/>
            <person name="Yu J."/>
        </authorList>
    </citation>
    <scope>NUCLEOTIDE SEQUENCE [LARGE SCALE GENOMIC DNA]</scope>
    <source>
        <strain>05ZYH33</strain>
    </source>
</reference>
<gene>
    <name evidence="1" type="primary">murB</name>
    <name type="ordered locus">SSU05_0804</name>
</gene>
<protein>
    <recommendedName>
        <fullName evidence="1">UDP-N-acetylenolpyruvoylglucosamine reductase</fullName>
        <ecNumber evidence="1">1.3.1.98</ecNumber>
    </recommendedName>
    <alternativeName>
        <fullName evidence="1">UDP-N-acetylmuramate dehydrogenase</fullName>
    </alternativeName>
</protein>
<dbReference type="EC" id="1.3.1.98" evidence="1"/>
<dbReference type="EMBL" id="CP000407">
    <property type="protein sequence ID" value="ABP89770.1"/>
    <property type="molecule type" value="Genomic_DNA"/>
</dbReference>
<dbReference type="SMR" id="A4VUI1"/>
<dbReference type="STRING" id="391295.SSU05_0804"/>
<dbReference type="KEGG" id="ssu:SSU05_0804"/>
<dbReference type="eggNOG" id="COG0812">
    <property type="taxonomic scope" value="Bacteria"/>
</dbReference>
<dbReference type="HOGENOM" id="CLU_035304_1_1_9"/>
<dbReference type="UniPathway" id="UPA00219"/>
<dbReference type="GO" id="GO:0005829">
    <property type="term" value="C:cytosol"/>
    <property type="evidence" value="ECO:0007669"/>
    <property type="project" value="TreeGrafter"/>
</dbReference>
<dbReference type="GO" id="GO:0071949">
    <property type="term" value="F:FAD binding"/>
    <property type="evidence" value="ECO:0007669"/>
    <property type="project" value="InterPro"/>
</dbReference>
<dbReference type="GO" id="GO:0008762">
    <property type="term" value="F:UDP-N-acetylmuramate dehydrogenase activity"/>
    <property type="evidence" value="ECO:0007669"/>
    <property type="project" value="UniProtKB-UniRule"/>
</dbReference>
<dbReference type="GO" id="GO:0051301">
    <property type="term" value="P:cell division"/>
    <property type="evidence" value="ECO:0007669"/>
    <property type="project" value="UniProtKB-KW"/>
</dbReference>
<dbReference type="GO" id="GO:0071555">
    <property type="term" value="P:cell wall organization"/>
    <property type="evidence" value="ECO:0007669"/>
    <property type="project" value="UniProtKB-KW"/>
</dbReference>
<dbReference type="GO" id="GO:0009252">
    <property type="term" value="P:peptidoglycan biosynthetic process"/>
    <property type="evidence" value="ECO:0007669"/>
    <property type="project" value="UniProtKB-UniRule"/>
</dbReference>
<dbReference type="GO" id="GO:0008360">
    <property type="term" value="P:regulation of cell shape"/>
    <property type="evidence" value="ECO:0007669"/>
    <property type="project" value="UniProtKB-KW"/>
</dbReference>
<dbReference type="Gene3D" id="3.30.465.10">
    <property type="match status" value="1"/>
</dbReference>
<dbReference type="Gene3D" id="3.90.78.10">
    <property type="entry name" value="UDP-N-acetylenolpyruvoylglucosamine reductase, C-terminal domain"/>
    <property type="match status" value="1"/>
</dbReference>
<dbReference type="Gene3D" id="3.30.43.10">
    <property type="entry name" value="Uridine Diphospho-n-acetylenolpyruvylglucosamine Reductase, domain 2"/>
    <property type="match status" value="1"/>
</dbReference>
<dbReference type="HAMAP" id="MF_00037">
    <property type="entry name" value="MurB"/>
    <property type="match status" value="1"/>
</dbReference>
<dbReference type="InterPro" id="IPR016166">
    <property type="entry name" value="FAD-bd_PCMH"/>
</dbReference>
<dbReference type="InterPro" id="IPR036318">
    <property type="entry name" value="FAD-bd_PCMH-like_sf"/>
</dbReference>
<dbReference type="InterPro" id="IPR016167">
    <property type="entry name" value="FAD-bd_PCMH_sub1"/>
</dbReference>
<dbReference type="InterPro" id="IPR016169">
    <property type="entry name" value="FAD-bd_PCMH_sub2"/>
</dbReference>
<dbReference type="InterPro" id="IPR003170">
    <property type="entry name" value="MurB"/>
</dbReference>
<dbReference type="InterPro" id="IPR011601">
    <property type="entry name" value="MurB_C"/>
</dbReference>
<dbReference type="InterPro" id="IPR036635">
    <property type="entry name" value="MurB_C_sf"/>
</dbReference>
<dbReference type="InterPro" id="IPR006094">
    <property type="entry name" value="Oxid_FAD_bind_N"/>
</dbReference>
<dbReference type="NCBIfam" id="TIGR00179">
    <property type="entry name" value="murB"/>
    <property type="match status" value="1"/>
</dbReference>
<dbReference type="NCBIfam" id="NF010480">
    <property type="entry name" value="PRK13905.1"/>
    <property type="match status" value="1"/>
</dbReference>
<dbReference type="PANTHER" id="PTHR21071">
    <property type="entry name" value="UDP-N-ACETYLENOLPYRUVOYLGLUCOSAMINE REDUCTASE"/>
    <property type="match status" value="1"/>
</dbReference>
<dbReference type="PANTHER" id="PTHR21071:SF4">
    <property type="entry name" value="UDP-N-ACETYLENOLPYRUVOYLGLUCOSAMINE REDUCTASE"/>
    <property type="match status" value="1"/>
</dbReference>
<dbReference type="Pfam" id="PF01565">
    <property type="entry name" value="FAD_binding_4"/>
    <property type="match status" value="1"/>
</dbReference>
<dbReference type="Pfam" id="PF02873">
    <property type="entry name" value="MurB_C"/>
    <property type="match status" value="1"/>
</dbReference>
<dbReference type="SUPFAM" id="SSF56176">
    <property type="entry name" value="FAD-binding/transporter-associated domain-like"/>
    <property type="match status" value="1"/>
</dbReference>
<dbReference type="SUPFAM" id="SSF56194">
    <property type="entry name" value="Uridine diphospho-N-Acetylenolpyruvylglucosamine reductase, MurB, C-terminal domain"/>
    <property type="match status" value="1"/>
</dbReference>
<dbReference type="PROSITE" id="PS51387">
    <property type="entry name" value="FAD_PCMH"/>
    <property type="match status" value="1"/>
</dbReference>
<organism>
    <name type="scientific">Streptococcus suis (strain 05ZYH33)</name>
    <dbReference type="NCBI Taxonomy" id="391295"/>
    <lineage>
        <taxon>Bacteria</taxon>
        <taxon>Bacillati</taxon>
        <taxon>Bacillota</taxon>
        <taxon>Bacilli</taxon>
        <taxon>Lactobacillales</taxon>
        <taxon>Streptococcaceae</taxon>
        <taxon>Streptococcus</taxon>
    </lineage>
</organism>
<proteinExistence type="inferred from homology"/>
<feature type="chain" id="PRO_0000332508" description="UDP-N-acetylenolpyruvoylglucosamine reductase">
    <location>
        <begin position="1"/>
        <end position="302"/>
    </location>
</feature>
<feature type="domain" description="FAD-binding PCMH-type" evidence="1">
    <location>
        <begin position="27"/>
        <end position="192"/>
    </location>
</feature>
<feature type="active site" evidence="1">
    <location>
        <position position="171"/>
    </location>
</feature>
<feature type="active site" description="Proton donor" evidence="1">
    <location>
        <position position="221"/>
    </location>
</feature>
<feature type="active site" evidence="1">
    <location>
        <position position="291"/>
    </location>
</feature>
<name>MURB_STRSY</name>
<keyword id="KW-0131">Cell cycle</keyword>
<keyword id="KW-0132">Cell division</keyword>
<keyword id="KW-0133">Cell shape</keyword>
<keyword id="KW-0961">Cell wall biogenesis/degradation</keyword>
<keyword id="KW-0963">Cytoplasm</keyword>
<keyword id="KW-0274">FAD</keyword>
<keyword id="KW-0285">Flavoprotein</keyword>
<keyword id="KW-0521">NADP</keyword>
<keyword id="KW-0560">Oxidoreductase</keyword>
<keyword id="KW-0573">Peptidoglycan synthesis</keyword>
<accession>A4VUI1</accession>